<accession>A6WWE5</accession>
<protein>
    <recommendedName>
        <fullName evidence="1">Small ribosomal subunit protein bS18</fullName>
    </recommendedName>
    <alternativeName>
        <fullName evidence="3">30S ribosomal protein S18</fullName>
    </alternativeName>
</protein>
<sequence>MVDINQIPTRRPFHRRRKTCPFSGANAPKIDYKDIKLLQRYISERGKIVPSRITAVSQKKQRELAKAIKRARFLGLLPYVVK</sequence>
<gene>
    <name evidence="1" type="primary">rpsR</name>
    <name type="ordered locus">Oant_0568</name>
</gene>
<name>RS18_BRUA4</name>
<feature type="chain" id="PRO_1000003550" description="Small ribosomal subunit protein bS18">
    <location>
        <begin position="1"/>
        <end position="82"/>
    </location>
</feature>
<feature type="region of interest" description="Disordered" evidence="2">
    <location>
        <begin position="1"/>
        <end position="20"/>
    </location>
</feature>
<evidence type="ECO:0000255" key="1">
    <source>
        <dbReference type="HAMAP-Rule" id="MF_00270"/>
    </source>
</evidence>
<evidence type="ECO:0000256" key="2">
    <source>
        <dbReference type="SAM" id="MobiDB-lite"/>
    </source>
</evidence>
<evidence type="ECO:0000305" key="3"/>
<comment type="function">
    <text evidence="1">Binds as a heterodimer with protein bS6 to the central domain of the 16S rRNA, where it helps stabilize the platform of the 30S subunit.</text>
</comment>
<comment type="subunit">
    <text evidence="1">Part of the 30S ribosomal subunit. Forms a tight heterodimer with protein bS6.</text>
</comment>
<comment type="similarity">
    <text evidence="1">Belongs to the bacterial ribosomal protein bS18 family.</text>
</comment>
<proteinExistence type="inferred from homology"/>
<reference key="1">
    <citation type="journal article" date="2011" name="J. Bacteriol.">
        <title>Genome of Ochrobactrum anthropi ATCC 49188 T, a versatile opportunistic pathogen and symbiont of several eukaryotic hosts.</title>
        <authorList>
            <person name="Chain P.S."/>
            <person name="Lang D.M."/>
            <person name="Comerci D.J."/>
            <person name="Malfatti S.A."/>
            <person name="Vergez L.M."/>
            <person name="Shin M."/>
            <person name="Ugalde R.A."/>
            <person name="Garcia E."/>
            <person name="Tolmasky M.E."/>
        </authorList>
    </citation>
    <scope>NUCLEOTIDE SEQUENCE [LARGE SCALE GENOMIC DNA]</scope>
    <source>
        <strain>ATCC 49188 / DSM 6882 / CCUG 24695 / JCM 21032 / LMG 3331 / NBRC 15819 / NCTC 12168 / Alc 37</strain>
    </source>
</reference>
<dbReference type="EMBL" id="CP000758">
    <property type="protein sequence ID" value="ABS13299.1"/>
    <property type="molecule type" value="Genomic_DNA"/>
</dbReference>
<dbReference type="RefSeq" id="WP_006466219.1">
    <property type="nucleotide sequence ID" value="NC_009667.1"/>
</dbReference>
<dbReference type="SMR" id="A6WWE5"/>
<dbReference type="STRING" id="439375.Oant_0568"/>
<dbReference type="GeneID" id="93109355"/>
<dbReference type="KEGG" id="oan:Oant_0568"/>
<dbReference type="eggNOG" id="COG0238">
    <property type="taxonomic scope" value="Bacteria"/>
</dbReference>
<dbReference type="HOGENOM" id="CLU_148710_2_2_5"/>
<dbReference type="Proteomes" id="UP000002301">
    <property type="component" value="Chromosome 1"/>
</dbReference>
<dbReference type="GO" id="GO:0022627">
    <property type="term" value="C:cytosolic small ribosomal subunit"/>
    <property type="evidence" value="ECO:0007669"/>
    <property type="project" value="TreeGrafter"/>
</dbReference>
<dbReference type="GO" id="GO:0070181">
    <property type="term" value="F:small ribosomal subunit rRNA binding"/>
    <property type="evidence" value="ECO:0007669"/>
    <property type="project" value="TreeGrafter"/>
</dbReference>
<dbReference type="GO" id="GO:0003735">
    <property type="term" value="F:structural constituent of ribosome"/>
    <property type="evidence" value="ECO:0007669"/>
    <property type="project" value="InterPro"/>
</dbReference>
<dbReference type="GO" id="GO:0006412">
    <property type="term" value="P:translation"/>
    <property type="evidence" value="ECO:0007669"/>
    <property type="project" value="UniProtKB-UniRule"/>
</dbReference>
<dbReference type="Gene3D" id="4.10.640.10">
    <property type="entry name" value="Ribosomal protein S18"/>
    <property type="match status" value="1"/>
</dbReference>
<dbReference type="HAMAP" id="MF_00270">
    <property type="entry name" value="Ribosomal_bS18"/>
    <property type="match status" value="1"/>
</dbReference>
<dbReference type="InterPro" id="IPR001648">
    <property type="entry name" value="Ribosomal_bS18"/>
</dbReference>
<dbReference type="InterPro" id="IPR018275">
    <property type="entry name" value="Ribosomal_bS18_CS"/>
</dbReference>
<dbReference type="InterPro" id="IPR036870">
    <property type="entry name" value="Ribosomal_bS18_sf"/>
</dbReference>
<dbReference type="NCBIfam" id="TIGR00165">
    <property type="entry name" value="S18"/>
    <property type="match status" value="1"/>
</dbReference>
<dbReference type="PANTHER" id="PTHR13479">
    <property type="entry name" value="30S RIBOSOMAL PROTEIN S18"/>
    <property type="match status" value="1"/>
</dbReference>
<dbReference type="PANTHER" id="PTHR13479:SF40">
    <property type="entry name" value="SMALL RIBOSOMAL SUBUNIT PROTEIN BS18M"/>
    <property type="match status" value="1"/>
</dbReference>
<dbReference type="Pfam" id="PF01084">
    <property type="entry name" value="Ribosomal_S18"/>
    <property type="match status" value="1"/>
</dbReference>
<dbReference type="PRINTS" id="PR00974">
    <property type="entry name" value="RIBOSOMALS18"/>
</dbReference>
<dbReference type="SUPFAM" id="SSF46911">
    <property type="entry name" value="Ribosomal protein S18"/>
    <property type="match status" value="1"/>
</dbReference>
<dbReference type="PROSITE" id="PS00057">
    <property type="entry name" value="RIBOSOMAL_S18"/>
    <property type="match status" value="1"/>
</dbReference>
<keyword id="KW-1185">Reference proteome</keyword>
<keyword id="KW-0687">Ribonucleoprotein</keyword>
<keyword id="KW-0689">Ribosomal protein</keyword>
<keyword id="KW-0694">RNA-binding</keyword>
<keyword id="KW-0699">rRNA-binding</keyword>
<organism>
    <name type="scientific">Brucella anthropi (strain ATCC 49188 / DSM 6882 / CCUG 24695 / JCM 21032 / LMG 3331 / NBRC 15819 / NCTC 12168 / Alc 37)</name>
    <name type="common">Ochrobactrum anthropi</name>
    <dbReference type="NCBI Taxonomy" id="439375"/>
    <lineage>
        <taxon>Bacteria</taxon>
        <taxon>Pseudomonadati</taxon>
        <taxon>Pseudomonadota</taxon>
        <taxon>Alphaproteobacteria</taxon>
        <taxon>Hyphomicrobiales</taxon>
        <taxon>Brucellaceae</taxon>
        <taxon>Brucella/Ochrobactrum group</taxon>
        <taxon>Brucella</taxon>
    </lineage>
</organism>